<protein>
    <recommendedName>
        <fullName evidence="1">Iron-sulfur cluster insertion protein ErpA</fullName>
    </recommendedName>
</protein>
<keyword id="KW-0408">Iron</keyword>
<keyword id="KW-0411">Iron-sulfur</keyword>
<keyword id="KW-0479">Metal-binding</keyword>
<accession>A7NDP2</accession>
<name>ERPA_FRATF</name>
<comment type="function">
    <text evidence="1">Required for insertion of 4Fe-4S clusters for at least IspG.</text>
</comment>
<comment type="cofactor">
    <cofactor evidence="1">
        <name>iron-sulfur cluster</name>
        <dbReference type="ChEBI" id="CHEBI:30408"/>
    </cofactor>
    <text evidence="1">Binds 1 iron-sulfur cluster per subunit.</text>
</comment>
<comment type="subunit">
    <text evidence="1">Homodimer.</text>
</comment>
<comment type="similarity">
    <text evidence="1">Belongs to the HesB/IscA family.</text>
</comment>
<sequence>MSEVVQSVDPINFTEAASLKVKELIEEEGDNSLSLRVYITGGGCSGFQYAFAFDNEVKEDDMVITKNGVRLLVDSMSFQYLVGADVDYKDDVEGAYFVIRNPNAKTTCGCGSSFSV</sequence>
<feature type="chain" id="PRO_0000311481" description="Iron-sulfur cluster insertion protein ErpA">
    <location>
        <begin position="1"/>
        <end position="116"/>
    </location>
</feature>
<feature type="binding site" evidence="1">
    <location>
        <position position="44"/>
    </location>
    <ligand>
        <name>iron-sulfur cluster</name>
        <dbReference type="ChEBI" id="CHEBI:30408"/>
    </ligand>
</feature>
<feature type="binding site" evidence="1">
    <location>
        <position position="108"/>
    </location>
    <ligand>
        <name>iron-sulfur cluster</name>
        <dbReference type="ChEBI" id="CHEBI:30408"/>
    </ligand>
</feature>
<feature type="binding site" evidence="1">
    <location>
        <position position="110"/>
    </location>
    <ligand>
        <name>iron-sulfur cluster</name>
        <dbReference type="ChEBI" id="CHEBI:30408"/>
    </ligand>
</feature>
<dbReference type="EMBL" id="CP000803">
    <property type="protein sequence ID" value="ABU62095.1"/>
    <property type="molecule type" value="Genomic_DNA"/>
</dbReference>
<dbReference type="RefSeq" id="WP_003016875.1">
    <property type="nucleotide sequence ID" value="NC_009749.1"/>
</dbReference>
<dbReference type="SMR" id="A7NDP2"/>
<dbReference type="GeneID" id="75263905"/>
<dbReference type="KEGG" id="fta:FTA_1620"/>
<dbReference type="HOGENOM" id="CLU_069054_5_3_6"/>
<dbReference type="GO" id="GO:0051537">
    <property type="term" value="F:2 iron, 2 sulfur cluster binding"/>
    <property type="evidence" value="ECO:0007669"/>
    <property type="project" value="TreeGrafter"/>
</dbReference>
<dbReference type="GO" id="GO:0051539">
    <property type="term" value="F:4 iron, 4 sulfur cluster binding"/>
    <property type="evidence" value="ECO:0007669"/>
    <property type="project" value="TreeGrafter"/>
</dbReference>
<dbReference type="GO" id="GO:0005506">
    <property type="term" value="F:iron ion binding"/>
    <property type="evidence" value="ECO:0007669"/>
    <property type="project" value="UniProtKB-UniRule"/>
</dbReference>
<dbReference type="GO" id="GO:0016226">
    <property type="term" value="P:iron-sulfur cluster assembly"/>
    <property type="evidence" value="ECO:0007669"/>
    <property type="project" value="UniProtKB-UniRule"/>
</dbReference>
<dbReference type="FunFam" id="2.60.300.12:FF:000002">
    <property type="entry name" value="Iron-sulfur cluster insertion protein ErpA"/>
    <property type="match status" value="1"/>
</dbReference>
<dbReference type="Gene3D" id="2.60.300.12">
    <property type="entry name" value="HesB-like domain"/>
    <property type="match status" value="1"/>
</dbReference>
<dbReference type="HAMAP" id="MF_01380">
    <property type="entry name" value="Fe_S_insert_ErpA"/>
    <property type="match status" value="1"/>
</dbReference>
<dbReference type="InterPro" id="IPR000361">
    <property type="entry name" value="FeS_biogenesis"/>
</dbReference>
<dbReference type="InterPro" id="IPR016092">
    <property type="entry name" value="FeS_cluster_insertion"/>
</dbReference>
<dbReference type="InterPro" id="IPR017870">
    <property type="entry name" value="FeS_cluster_insertion_CS"/>
</dbReference>
<dbReference type="InterPro" id="IPR023063">
    <property type="entry name" value="FeS_cluster_insertion_RrpA"/>
</dbReference>
<dbReference type="InterPro" id="IPR035903">
    <property type="entry name" value="HesB-like_dom_sf"/>
</dbReference>
<dbReference type="NCBIfam" id="TIGR00049">
    <property type="entry name" value="iron-sulfur cluster assembly accessory protein"/>
    <property type="match status" value="1"/>
</dbReference>
<dbReference type="NCBIfam" id="NF010147">
    <property type="entry name" value="PRK13623.1"/>
    <property type="match status" value="1"/>
</dbReference>
<dbReference type="PANTHER" id="PTHR43011">
    <property type="entry name" value="IRON-SULFUR CLUSTER ASSEMBLY 2 HOMOLOG, MITOCHONDRIAL"/>
    <property type="match status" value="1"/>
</dbReference>
<dbReference type="PANTHER" id="PTHR43011:SF1">
    <property type="entry name" value="IRON-SULFUR CLUSTER ASSEMBLY 2 HOMOLOG, MITOCHONDRIAL"/>
    <property type="match status" value="1"/>
</dbReference>
<dbReference type="Pfam" id="PF01521">
    <property type="entry name" value="Fe-S_biosyn"/>
    <property type="match status" value="1"/>
</dbReference>
<dbReference type="SUPFAM" id="SSF89360">
    <property type="entry name" value="HesB-like domain"/>
    <property type="match status" value="1"/>
</dbReference>
<dbReference type="PROSITE" id="PS01152">
    <property type="entry name" value="HESB"/>
    <property type="match status" value="1"/>
</dbReference>
<gene>
    <name evidence="1" type="primary">erpA</name>
    <name type="ordered locus">FTA_1620</name>
</gene>
<organism>
    <name type="scientific">Francisella tularensis subsp. holarctica (strain FTNF002-00 / FTA)</name>
    <dbReference type="NCBI Taxonomy" id="458234"/>
    <lineage>
        <taxon>Bacteria</taxon>
        <taxon>Pseudomonadati</taxon>
        <taxon>Pseudomonadota</taxon>
        <taxon>Gammaproteobacteria</taxon>
        <taxon>Thiotrichales</taxon>
        <taxon>Francisellaceae</taxon>
        <taxon>Francisella</taxon>
    </lineage>
</organism>
<evidence type="ECO:0000255" key="1">
    <source>
        <dbReference type="HAMAP-Rule" id="MF_01380"/>
    </source>
</evidence>
<proteinExistence type="inferred from homology"/>
<reference key="1">
    <citation type="journal article" date="2009" name="PLoS ONE">
        <title>Complete genome sequence of Francisella tularensis subspecies holarctica FTNF002-00.</title>
        <authorList>
            <person name="Barabote R.D."/>
            <person name="Xie G."/>
            <person name="Brettin T.S."/>
            <person name="Hinrichs S.H."/>
            <person name="Fey P.D."/>
            <person name="Jay J.J."/>
            <person name="Engle J.L."/>
            <person name="Godbole S.D."/>
            <person name="Noronha J.M."/>
            <person name="Scheuermann R.H."/>
            <person name="Zhou L.W."/>
            <person name="Lion C."/>
            <person name="Dempsey M.P."/>
        </authorList>
    </citation>
    <scope>NUCLEOTIDE SEQUENCE [LARGE SCALE GENOMIC DNA]</scope>
    <source>
        <strain>FTNF002-00 / FTA</strain>
    </source>
</reference>